<reference key="1">
    <citation type="journal article" date="2002" name="Lancet">
        <title>Genome and virulence determinants of high virulence community-acquired MRSA.</title>
        <authorList>
            <person name="Baba T."/>
            <person name="Takeuchi F."/>
            <person name="Kuroda M."/>
            <person name="Yuzawa H."/>
            <person name="Aoki K."/>
            <person name="Oguchi A."/>
            <person name="Nagai Y."/>
            <person name="Iwama N."/>
            <person name="Asano K."/>
            <person name="Naimi T."/>
            <person name="Kuroda H."/>
            <person name="Cui L."/>
            <person name="Yamamoto K."/>
            <person name="Hiramatsu K."/>
        </authorList>
    </citation>
    <scope>NUCLEOTIDE SEQUENCE [LARGE SCALE GENOMIC DNA]</scope>
    <source>
        <strain>MW2</strain>
    </source>
</reference>
<organism>
    <name type="scientific">Staphylococcus aureus (strain MW2)</name>
    <dbReference type="NCBI Taxonomy" id="196620"/>
    <lineage>
        <taxon>Bacteria</taxon>
        <taxon>Bacillati</taxon>
        <taxon>Bacillota</taxon>
        <taxon>Bacilli</taxon>
        <taxon>Bacillales</taxon>
        <taxon>Staphylococcaceae</taxon>
        <taxon>Staphylococcus</taxon>
    </lineage>
</organism>
<dbReference type="EMBL" id="BA000033">
    <property type="protein sequence ID" value="BAB94751.1"/>
    <property type="molecule type" value="Genomic_DNA"/>
</dbReference>
<dbReference type="RefSeq" id="WP_001242102.1">
    <property type="nucleotide sequence ID" value="NC_003923.1"/>
</dbReference>
<dbReference type="KEGG" id="sam:MW0886"/>
<dbReference type="HOGENOM" id="CLU_142282_0_0_9"/>
<dbReference type="HAMAP" id="MF_01861">
    <property type="entry name" value="UPF0738"/>
    <property type="match status" value="1"/>
</dbReference>
<dbReference type="InterPro" id="IPR020908">
    <property type="entry name" value="UPF0738"/>
</dbReference>
<dbReference type="Pfam" id="PF19785">
    <property type="entry name" value="UPF0738"/>
    <property type="match status" value="1"/>
</dbReference>
<evidence type="ECO:0000255" key="1">
    <source>
        <dbReference type="HAMAP-Rule" id="MF_01861"/>
    </source>
</evidence>
<gene>
    <name type="ordered locus">MW0886</name>
</gene>
<feature type="chain" id="PRO_0000369665" description="UPF0738 protein MW0886">
    <location>
        <begin position="1"/>
        <end position="115"/>
    </location>
</feature>
<accession>Q8NXC8</accession>
<protein>
    <recommendedName>
        <fullName evidence="1">UPF0738 protein MW0886</fullName>
    </recommendedName>
</protein>
<proteinExistence type="inferred from homology"/>
<comment type="similarity">
    <text evidence="1">Belongs to the UPF0738 family.</text>
</comment>
<sequence>MRLYINEIKIKDDILYCYTEDSIKGLSEVGQMLVDSDNYAFAYTLDDGKAYAYLIFVQETWTMLHENMTKKIIINDELELTEFHQELTYILDNIKGNNNYGKEFVATVEETFDIE</sequence>
<name>Y886_STAAW</name>